<feature type="chain" id="PRO_0000143372" description="Maturase K">
    <location>
        <begin position="1"/>
        <end position="514"/>
    </location>
</feature>
<keyword id="KW-0150">Chloroplast</keyword>
<keyword id="KW-0507">mRNA processing</keyword>
<keyword id="KW-0934">Plastid</keyword>
<keyword id="KW-0694">RNA-binding</keyword>
<keyword id="KW-0819">tRNA processing</keyword>
<reference key="1">
    <citation type="submission" date="2000-06" db="EMBL/GenBank/DDBJ databases">
        <title>Chloroplast matK sequence data reconfirm the monophyly of extant gymnosperms and the coniferophytic origin of Gnetales.</title>
        <authorList>
            <person name="Chaw S.-M."/>
            <person name="Hu S.-H."/>
        </authorList>
    </citation>
    <scope>NUCLEOTIDE SEQUENCE [GENOMIC DNA]</scope>
</reference>
<accession>Q8MEY0</accession>
<sequence length="514" mass="61352">MDKLQRDGKEDTPRQRRFLYPLLFQEDLYAIAYDHYFNRSSSFEPMENSSSNDRFSFLTVKRLISRIRQQNGSIVPFVNCDQTKLVGHNRSFYSELVLGGLTAVPEVPLSIRSKHSLERMNEWTSFRSIHSIFPLMEDKIPHSNFILDIRIPHLTHPEILVRTFRRWIQDAPSLHSLRSVLHEHRNLIISSNLDQLILIASKENTRLSLFLWNYYAYECESLLVPLWKRFFYSRSLPYESFIERTPFYRKIEHIVIFYHKYLKKSLWFLKDPSIHYVKHRERSIIALRGTYLLAKKWRYHITKFWQCHFHLWPQPYRIYIDELSNNCFSFLGYLLSVKMKTSVVRIKMPDDSFITDLITKEFDPIAPTTLLIGSLAKEKFCDISGHPISRLAWTGLTDDDILDRFDRIWRNIFHYHSGSSKKDGLYRMKYILRLPCAKTLACKHKSAIRVVRERFGSELFTKSSPKERESIFLSFSKTRSQRERIWHSDIIQINPLINSCRKKHNLQIEPLFDR</sequence>
<organism>
    <name type="scientific">Encephalartos altensteinii</name>
    <name type="common">Altenstein's bread tree</name>
    <name type="synonym">Eastern Cape giant cycad</name>
    <dbReference type="NCBI Taxonomy" id="3300"/>
    <lineage>
        <taxon>Eukaryota</taxon>
        <taxon>Viridiplantae</taxon>
        <taxon>Streptophyta</taxon>
        <taxon>Embryophyta</taxon>
        <taxon>Tracheophyta</taxon>
        <taxon>Spermatophyta</taxon>
        <taxon>Cycadidae</taxon>
        <taxon>Cycadales</taxon>
        <taxon>Zamiaceae</taxon>
        <taxon>Encephalartos</taxon>
    </lineage>
</organism>
<comment type="function">
    <text evidence="1">Usually encoded in the trnK tRNA gene intron. Probably assists in splicing its own and other chloroplast group II introns.</text>
</comment>
<comment type="subcellular location">
    <subcellularLocation>
        <location>Plastid</location>
        <location>Chloroplast</location>
    </subcellularLocation>
</comment>
<comment type="similarity">
    <text evidence="1">Belongs to the intron maturase 2 family. MatK subfamily.</text>
</comment>
<protein>
    <recommendedName>
        <fullName evidence="1">Maturase K</fullName>
    </recommendedName>
    <alternativeName>
        <fullName evidence="1">Intron maturase</fullName>
    </alternativeName>
</protein>
<name>MATK_ENCAL</name>
<proteinExistence type="inferred from homology"/>
<dbReference type="EMBL" id="AF279798">
    <property type="protein sequence ID" value="AAK69121.1"/>
    <property type="molecule type" value="Genomic_DNA"/>
</dbReference>
<dbReference type="GO" id="GO:0009507">
    <property type="term" value="C:chloroplast"/>
    <property type="evidence" value="ECO:0007669"/>
    <property type="project" value="UniProtKB-SubCell"/>
</dbReference>
<dbReference type="GO" id="GO:0003723">
    <property type="term" value="F:RNA binding"/>
    <property type="evidence" value="ECO:0007669"/>
    <property type="project" value="UniProtKB-KW"/>
</dbReference>
<dbReference type="GO" id="GO:0006397">
    <property type="term" value="P:mRNA processing"/>
    <property type="evidence" value="ECO:0007669"/>
    <property type="project" value="UniProtKB-KW"/>
</dbReference>
<dbReference type="GO" id="GO:0008380">
    <property type="term" value="P:RNA splicing"/>
    <property type="evidence" value="ECO:0007669"/>
    <property type="project" value="UniProtKB-UniRule"/>
</dbReference>
<dbReference type="GO" id="GO:0008033">
    <property type="term" value="P:tRNA processing"/>
    <property type="evidence" value="ECO:0007669"/>
    <property type="project" value="UniProtKB-KW"/>
</dbReference>
<dbReference type="HAMAP" id="MF_01390">
    <property type="entry name" value="MatK"/>
    <property type="match status" value="1"/>
</dbReference>
<dbReference type="InterPro" id="IPR024937">
    <property type="entry name" value="Domain_X"/>
</dbReference>
<dbReference type="InterPro" id="IPR002866">
    <property type="entry name" value="Maturase_MatK"/>
</dbReference>
<dbReference type="InterPro" id="IPR024942">
    <property type="entry name" value="Maturase_MatK_N"/>
</dbReference>
<dbReference type="PANTHER" id="PTHR34811">
    <property type="entry name" value="MATURASE K"/>
    <property type="match status" value="1"/>
</dbReference>
<dbReference type="PANTHER" id="PTHR34811:SF1">
    <property type="entry name" value="MATURASE K"/>
    <property type="match status" value="1"/>
</dbReference>
<dbReference type="Pfam" id="PF01348">
    <property type="entry name" value="Intron_maturas2"/>
    <property type="match status" value="1"/>
</dbReference>
<dbReference type="Pfam" id="PF01824">
    <property type="entry name" value="MatK_N"/>
    <property type="match status" value="1"/>
</dbReference>
<gene>
    <name evidence="1" type="primary">matK</name>
</gene>
<geneLocation type="chloroplast"/>
<evidence type="ECO:0000255" key="1">
    <source>
        <dbReference type="HAMAP-Rule" id="MF_01390"/>
    </source>
</evidence>